<dbReference type="EMBL" id="Z83337">
    <property type="protein sequence ID" value="CAB05942.1"/>
    <property type="molecule type" value="Genomic_DNA"/>
</dbReference>
<dbReference type="EMBL" id="AL009126">
    <property type="protein sequence ID" value="CAB15655.1"/>
    <property type="molecule type" value="Genomic_DNA"/>
</dbReference>
<dbReference type="PIR" id="G69688">
    <property type="entry name" value="G69688"/>
</dbReference>
<dbReference type="RefSeq" id="NP_391519.1">
    <property type="nucleotide sequence ID" value="NC_000964.3"/>
</dbReference>
<dbReference type="RefSeq" id="WP_003227782.1">
    <property type="nucleotide sequence ID" value="NZ_OZ025638.1"/>
</dbReference>
<dbReference type="SMR" id="P94583"/>
<dbReference type="FunCoup" id="P94583">
    <property type="interactions" value="33"/>
</dbReference>
<dbReference type="STRING" id="224308.BSU36380"/>
<dbReference type="PaxDb" id="224308-BSU36380"/>
<dbReference type="EnsemblBacteria" id="CAB15655">
    <property type="protein sequence ID" value="CAB15655"/>
    <property type="gene ID" value="BSU_36380"/>
</dbReference>
<dbReference type="GeneID" id="936919"/>
<dbReference type="KEGG" id="bsu:BSU36380"/>
<dbReference type="PATRIC" id="fig|224308.179.peg.3938"/>
<dbReference type="eggNOG" id="COG0457">
    <property type="taxonomic scope" value="Bacteria"/>
</dbReference>
<dbReference type="InParanoid" id="P94583"/>
<dbReference type="OrthoDB" id="2957368at2"/>
<dbReference type="PhylomeDB" id="P94583"/>
<dbReference type="BioCyc" id="BSUB:BSU36380-MONOMER"/>
<dbReference type="Proteomes" id="UP000001570">
    <property type="component" value="Chromosome"/>
</dbReference>
<dbReference type="GO" id="GO:0005737">
    <property type="term" value="C:cytoplasm"/>
    <property type="evidence" value="ECO:0007669"/>
    <property type="project" value="UniProtKB-SubCell"/>
</dbReference>
<dbReference type="Gene3D" id="1.25.40.10">
    <property type="entry name" value="Tetratricopeptide repeat domain"/>
    <property type="match status" value="1"/>
</dbReference>
<dbReference type="InterPro" id="IPR011990">
    <property type="entry name" value="TPR-like_helical_dom_sf"/>
</dbReference>
<dbReference type="InterPro" id="IPR019734">
    <property type="entry name" value="TPR_rpt"/>
</dbReference>
<dbReference type="Pfam" id="PF18801">
    <property type="entry name" value="RapH_N"/>
    <property type="match status" value="1"/>
</dbReference>
<dbReference type="Pfam" id="PF13424">
    <property type="entry name" value="TPR_12"/>
    <property type="match status" value="1"/>
</dbReference>
<dbReference type="SMART" id="SM00028">
    <property type="entry name" value="TPR"/>
    <property type="match status" value="3"/>
</dbReference>
<dbReference type="SUPFAM" id="SSF48452">
    <property type="entry name" value="TPR-like"/>
    <property type="match status" value="1"/>
</dbReference>
<dbReference type="PROSITE" id="PS50293">
    <property type="entry name" value="TPR_REGION"/>
    <property type="match status" value="1"/>
</dbReference>
<feature type="chain" id="PRO_0000106438" description="Regulatory protein RapD">
    <location>
        <begin position="1"/>
        <end position="354"/>
    </location>
</feature>
<feature type="repeat" description="TPR 1" evidence="2">
    <location>
        <begin position="64"/>
        <end position="105"/>
    </location>
</feature>
<feature type="repeat" description="TPR 2" evidence="2">
    <location>
        <begin position="107"/>
        <end position="126"/>
    </location>
</feature>
<feature type="repeat" description="TPR 3" evidence="1">
    <location>
        <begin position="130"/>
        <end position="163"/>
    </location>
</feature>
<feature type="repeat" description="TPR 4" evidence="1">
    <location>
        <begin position="171"/>
        <end position="204"/>
    </location>
</feature>
<feature type="repeat" description="TPR 5" evidence="1">
    <location>
        <begin position="211"/>
        <end position="244"/>
    </location>
</feature>
<feature type="repeat" description="TPR 6" evidence="2">
    <location>
        <begin position="321"/>
        <end position="353"/>
    </location>
</feature>
<reference key="1">
    <citation type="journal article" date="1997" name="Microbiology">
        <title>The Bacillus subtilis genome from gerBC (311 degrees) to licR (334 degrees).</title>
        <authorList>
            <person name="Presecan E."/>
            <person name="Moszer I."/>
            <person name="Boursier L."/>
            <person name="Cruz Ramos H."/>
            <person name="De La Fuente V."/>
            <person name="Hullo M.-F."/>
            <person name="Lelong C."/>
            <person name="Schleich S."/>
            <person name="Sekowska A."/>
            <person name="Song B.H."/>
            <person name="Villani G."/>
            <person name="Kunst F."/>
            <person name="Danchin A."/>
            <person name="Glaser P."/>
        </authorList>
    </citation>
    <scope>NUCLEOTIDE SEQUENCE [GENOMIC DNA]</scope>
    <source>
        <strain>168</strain>
    </source>
</reference>
<reference key="2">
    <citation type="journal article" date="1997" name="Nature">
        <title>The complete genome sequence of the Gram-positive bacterium Bacillus subtilis.</title>
        <authorList>
            <person name="Kunst F."/>
            <person name="Ogasawara N."/>
            <person name="Moszer I."/>
            <person name="Albertini A.M."/>
            <person name="Alloni G."/>
            <person name="Azevedo V."/>
            <person name="Bertero M.G."/>
            <person name="Bessieres P."/>
            <person name="Bolotin A."/>
            <person name="Borchert S."/>
            <person name="Borriss R."/>
            <person name="Boursier L."/>
            <person name="Brans A."/>
            <person name="Braun M."/>
            <person name="Brignell S.C."/>
            <person name="Bron S."/>
            <person name="Brouillet S."/>
            <person name="Bruschi C.V."/>
            <person name="Caldwell B."/>
            <person name="Capuano V."/>
            <person name="Carter N.M."/>
            <person name="Choi S.-K."/>
            <person name="Codani J.-J."/>
            <person name="Connerton I.F."/>
            <person name="Cummings N.J."/>
            <person name="Daniel R.A."/>
            <person name="Denizot F."/>
            <person name="Devine K.M."/>
            <person name="Duesterhoeft A."/>
            <person name="Ehrlich S.D."/>
            <person name="Emmerson P.T."/>
            <person name="Entian K.-D."/>
            <person name="Errington J."/>
            <person name="Fabret C."/>
            <person name="Ferrari E."/>
            <person name="Foulger D."/>
            <person name="Fritz C."/>
            <person name="Fujita M."/>
            <person name="Fujita Y."/>
            <person name="Fuma S."/>
            <person name="Galizzi A."/>
            <person name="Galleron N."/>
            <person name="Ghim S.-Y."/>
            <person name="Glaser P."/>
            <person name="Goffeau A."/>
            <person name="Golightly E.J."/>
            <person name="Grandi G."/>
            <person name="Guiseppi G."/>
            <person name="Guy B.J."/>
            <person name="Haga K."/>
            <person name="Haiech J."/>
            <person name="Harwood C.R."/>
            <person name="Henaut A."/>
            <person name="Hilbert H."/>
            <person name="Holsappel S."/>
            <person name="Hosono S."/>
            <person name="Hullo M.-F."/>
            <person name="Itaya M."/>
            <person name="Jones L.-M."/>
            <person name="Joris B."/>
            <person name="Karamata D."/>
            <person name="Kasahara Y."/>
            <person name="Klaerr-Blanchard M."/>
            <person name="Klein C."/>
            <person name="Kobayashi Y."/>
            <person name="Koetter P."/>
            <person name="Koningstein G."/>
            <person name="Krogh S."/>
            <person name="Kumano M."/>
            <person name="Kurita K."/>
            <person name="Lapidus A."/>
            <person name="Lardinois S."/>
            <person name="Lauber J."/>
            <person name="Lazarevic V."/>
            <person name="Lee S.-M."/>
            <person name="Levine A."/>
            <person name="Liu H."/>
            <person name="Masuda S."/>
            <person name="Mauel C."/>
            <person name="Medigue C."/>
            <person name="Medina N."/>
            <person name="Mellado R.P."/>
            <person name="Mizuno M."/>
            <person name="Moestl D."/>
            <person name="Nakai S."/>
            <person name="Noback M."/>
            <person name="Noone D."/>
            <person name="O'Reilly M."/>
            <person name="Ogawa K."/>
            <person name="Ogiwara A."/>
            <person name="Oudega B."/>
            <person name="Park S.-H."/>
            <person name="Parro V."/>
            <person name="Pohl T.M."/>
            <person name="Portetelle D."/>
            <person name="Porwollik S."/>
            <person name="Prescott A.M."/>
            <person name="Presecan E."/>
            <person name="Pujic P."/>
            <person name="Purnelle B."/>
            <person name="Rapoport G."/>
            <person name="Rey M."/>
            <person name="Reynolds S."/>
            <person name="Rieger M."/>
            <person name="Rivolta C."/>
            <person name="Rocha E."/>
            <person name="Roche B."/>
            <person name="Rose M."/>
            <person name="Sadaie Y."/>
            <person name="Sato T."/>
            <person name="Scanlan E."/>
            <person name="Schleich S."/>
            <person name="Schroeter R."/>
            <person name="Scoffone F."/>
            <person name="Sekiguchi J."/>
            <person name="Sekowska A."/>
            <person name="Seror S.J."/>
            <person name="Serror P."/>
            <person name="Shin B.-S."/>
            <person name="Soldo B."/>
            <person name="Sorokin A."/>
            <person name="Tacconi E."/>
            <person name="Takagi T."/>
            <person name="Takahashi H."/>
            <person name="Takemaru K."/>
            <person name="Takeuchi M."/>
            <person name="Tamakoshi A."/>
            <person name="Tanaka T."/>
            <person name="Terpstra P."/>
            <person name="Tognoni A."/>
            <person name="Tosato V."/>
            <person name="Uchiyama S."/>
            <person name="Vandenbol M."/>
            <person name="Vannier F."/>
            <person name="Vassarotti A."/>
            <person name="Viari A."/>
            <person name="Wambutt R."/>
            <person name="Wedler E."/>
            <person name="Wedler H."/>
            <person name="Weitzenegger T."/>
            <person name="Winters P."/>
            <person name="Wipat A."/>
            <person name="Yamamoto H."/>
            <person name="Yamane K."/>
            <person name="Yasumoto K."/>
            <person name="Yata K."/>
            <person name="Yoshida K."/>
            <person name="Yoshikawa H.-F."/>
            <person name="Zumstein E."/>
            <person name="Yoshikawa H."/>
            <person name="Danchin A."/>
        </authorList>
    </citation>
    <scope>NUCLEOTIDE SEQUENCE [LARGE SCALE GENOMIC DNA]</scope>
    <source>
        <strain>168</strain>
    </source>
</reference>
<organism>
    <name type="scientific">Bacillus subtilis (strain 168)</name>
    <dbReference type="NCBI Taxonomy" id="224308"/>
    <lineage>
        <taxon>Bacteria</taxon>
        <taxon>Bacillati</taxon>
        <taxon>Bacillota</taxon>
        <taxon>Bacilli</taxon>
        <taxon>Bacillales</taxon>
        <taxon>Bacillaceae</taxon>
        <taxon>Bacillus</taxon>
    </lineage>
</organism>
<gene>
    <name type="primary">rapD</name>
    <name type="synonym">ywpA</name>
    <name type="ordered locus">BSU36380</name>
</gene>
<accession>P94583</accession>
<keyword id="KW-0963">Cytoplasm</keyword>
<keyword id="KW-1185">Reference proteome</keyword>
<keyword id="KW-0677">Repeat</keyword>
<keyword id="KW-0802">TPR repeat</keyword>
<proteinExistence type="inferred from homology"/>
<comment type="subcellular location">
    <subcellularLocation>
        <location evidence="2">Cytoplasm</location>
    </subcellularLocation>
</comment>
<comment type="similarity">
    <text evidence="2">Belongs to the Rap family.</text>
</comment>
<sequence length="354" mass="42135">MISKFIEKRMLNMLDEWYSAMSKRKMNHVCTLKEKIDQHLPKIKKNTKLWMRYQLFQARHQLLFENQNGLDSLFDGLYGLEDKMDDELKYYLYFFSGLYEMVKTAPKHAVHHFKKAEQYLAAIHNTFEAADLYYQTAGAYYLMKSPPLSVQYVKKALHIYLHQFGYIKKVITCKLLLAVNYIDQERYEKAEQLFKEIIKKTQQLHDENLLCHAYYNLGFLKATEKKDQEALLYFRKVLKNQEFEMNSPVSYLHCVYESVRALFKTGNITEAKAVLQKGKELSEKVDIQTIYLKLKTLEALYTSAEDPYEQLLEYVLELEKIEAWVDLEVLLEDITEYYKKKDDFEKAAFFIMRG</sequence>
<evidence type="ECO:0000255" key="1"/>
<evidence type="ECO:0000305" key="2"/>
<protein>
    <recommendedName>
        <fullName evidence="2">Regulatory protein RapD</fullName>
    </recommendedName>
</protein>
<name>RAPD_BACSU</name>